<dbReference type="EC" id="2.4.1.79" evidence="3"/>
<dbReference type="EMBL" id="Y15062">
    <property type="protein sequence ID" value="CAA75346.1"/>
    <property type="molecule type" value="mRNA"/>
</dbReference>
<dbReference type="EMBL" id="AB050855">
    <property type="protein sequence ID" value="BAB17690.1"/>
    <property type="molecule type" value="mRNA"/>
</dbReference>
<dbReference type="EMBL" id="AB050856">
    <property type="protein sequence ID" value="BAB17691.1"/>
    <property type="molecule type" value="mRNA"/>
</dbReference>
<dbReference type="EMBL" id="AF132731">
    <property type="protein sequence ID" value="AAF66442.1"/>
    <property type="molecule type" value="mRNA"/>
</dbReference>
<dbReference type="EMBL" id="AF154848">
    <property type="protein sequence ID" value="AAF72106.1"/>
    <property type="molecule type" value="mRNA"/>
</dbReference>
<dbReference type="EMBL" id="AF494105">
    <property type="protein sequence ID" value="AAM96011.1"/>
    <property type="molecule type" value="Genomic_DNA"/>
</dbReference>
<dbReference type="EMBL" id="AF494106">
    <property type="protein sequence ID" value="AAM96012.1"/>
    <property type="molecule type" value="Genomic_DNA"/>
</dbReference>
<dbReference type="EMBL" id="AY359049">
    <property type="protein sequence ID" value="AAQ89408.1"/>
    <property type="molecule type" value="mRNA"/>
</dbReference>
<dbReference type="EMBL" id="CR457170">
    <property type="protein sequence ID" value="CAG33451.1"/>
    <property type="molecule type" value="mRNA"/>
</dbReference>
<dbReference type="EMBL" id="DQ158095">
    <property type="protein sequence ID" value="AAZ67917.1"/>
    <property type="molecule type" value="Genomic_DNA"/>
</dbReference>
<dbReference type="EMBL" id="CH471052">
    <property type="protein sequence ID" value="EAW78621.1"/>
    <property type="molecule type" value="Genomic_DNA"/>
</dbReference>
<dbReference type="EMBL" id="CH471052">
    <property type="protein sequence ID" value="EAW78623.1"/>
    <property type="molecule type" value="Genomic_DNA"/>
</dbReference>
<dbReference type="EMBL" id="CH471052">
    <property type="protein sequence ID" value="EAW78624.1"/>
    <property type="molecule type" value="Genomic_DNA"/>
</dbReference>
<dbReference type="EMBL" id="CH471052">
    <property type="protein sequence ID" value="EAW78625.1"/>
    <property type="molecule type" value="Genomic_DNA"/>
</dbReference>
<dbReference type="EMBL" id="BC047618">
    <property type="protein sequence ID" value="AAH47618.1"/>
    <property type="molecule type" value="mRNA"/>
</dbReference>
<dbReference type="CCDS" id="CCDS3193.1"/>
<dbReference type="RefSeq" id="NP_001033717.1">
    <property type="nucleotide sequence ID" value="NM_001038628.2"/>
</dbReference>
<dbReference type="RefSeq" id="NP_001336059.1">
    <property type="nucleotide sequence ID" value="NM_001349130.2"/>
</dbReference>
<dbReference type="RefSeq" id="NP_001336060.1">
    <property type="nucleotide sequence ID" value="NM_001349131.2"/>
</dbReference>
<dbReference type="RefSeq" id="NP_001336061.1">
    <property type="nucleotide sequence ID" value="NM_001349132.2"/>
</dbReference>
<dbReference type="RefSeq" id="NP_001336062.1">
    <property type="nucleotide sequence ID" value="NM_001349133.2"/>
</dbReference>
<dbReference type="RefSeq" id="NP_001336063.1">
    <property type="nucleotide sequence ID" value="NM_001349134.2"/>
</dbReference>
<dbReference type="RefSeq" id="NP_001336064.1">
    <property type="nucleotide sequence ID" value="NM_001349135.2"/>
</dbReference>
<dbReference type="RefSeq" id="NP_001336065.1">
    <property type="nucleotide sequence ID" value="NM_001349136.2"/>
</dbReference>
<dbReference type="RefSeq" id="NP_001336066.1">
    <property type="nucleotide sequence ID" value="NM_001349137.2"/>
</dbReference>
<dbReference type="RefSeq" id="NP_001336067.1">
    <property type="nucleotide sequence ID" value="NM_001349138.2"/>
</dbReference>
<dbReference type="RefSeq" id="NP_001336068.1">
    <property type="nucleotide sequence ID" value="NM_001349139.2"/>
</dbReference>
<dbReference type="RefSeq" id="NP_001336069.1">
    <property type="nucleotide sequence ID" value="NM_001349140.2"/>
</dbReference>
<dbReference type="RefSeq" id="NP_001336070.1">
    <property type="nucleotide sequence ID" value="NM_001349141.2"/>
</dbReference>
<dbReference type="RefSeq" id="NP_001336071.1">
    <property type="nucleotide sequence ID" value="NM_001349142.2"/>
</dbReference>
<dbReference type="RefSeq" id="NP_001336072.1">
    <property type="nucleotide sequence ID" value="NM_001349143.2"/>
</dbReference>
<dbReference type="RefSeq" id="NP_001336073.1">
    <property type="nucleotide sequence ID" value="NM_001349144.2"/>
</dbReference>
<dbReference type="RefSeq" id="NP_001336074.1">
    <property type="nucleotide sequence ID" value="NM_001349145.2"/>
</dbReference>
<dbReference type="RefSeq" id="NP_001336075.1">
    <property type="nucleotide sequence ID" value="NM_001349146.2"/>
</dbReference>
<dbReference type="RefSeq" id="NP_001336076.1">
    <property type="nucleotide sequence ID" value="NM_001349147.2"/>
</dbReference>
<dbReference type="RefSeq" id="NP_001336077.1">
    <property type="nucleotide sequence ID" value="NM_001349148.2"/>
</dbReference>
<dbReference type="RefSeq" id="NP_001336078.1">
    <property type="nucleotide sequence ID" value="NM_001349149.2"/>
</dbReference>
<dbReference type="RefSeq" id="NP_001336079.1">
    <property type="nucleotide sequence ID" value="NM_001349150.2"/>
</dbReference>
<dbReference type="RefSeq" id="NP_001336080.1">
    <property type="nucleotide sequence ID" value="NM_001349151.2"/>
</dbReference>
<dbReference type="RefSeq" id="NP_001336081.1">
    <property type="nucleotide sequence ID" value="NM_001349152.2"/>
</dbReference>
<dbReference type="RefSeq" id="NP_001336082.1">
    <property type="nucleotide sequence ID" value="NM_001349153.2"/>
</dbReference>
<dbReference type="RefSeq" id="NP_001336083.1">
    <property type="nucleotide sequence ID" value="NM_001349154.2"/>
</dbReference>
<dbReference type="RefSeq" id="NP_001336084.1">
    <property type="nucleotide sequence ID" value="NM_001349155.2"/>
</dbReference>
<dbReference type="RefSeq" id="NP_001336085.1">
    <property type="nucleotide sequence ID" value="NM_001349156.2"/>
</dbReference>
<dbReference type="RefSeq" id="NP_001336086.1">
    <property type="nucleotide sequence ID" value="NM_001349157.2"/>
</dbReference>
<dbReference type="RefSeq" id="NP_001336087.1">
    <property type="nucleotide sequence ID" value="NM_001349158.2"/>
</dbReference>
<dbReference type="RefSeq" id="NP_001336088.1">
    <property type="nucleotide sequence ID" value="NM_001349159.2"/>
</dbReference>
<dbReference type="RefSeq" id="NP_001336089.1">
    <property type="nucleotide sequence ID" value="NM_001349160.1"/>
</dbReference>
<dbReference type="RefSeq" id="NP_001336090.1">
    <property type="nucleotide sequence ID" value="NM_001349161.2"/>
</dbReference>
<dbReference type="RefSeq" id="NP_003772.1">
    <property type="nucleotide sequence ID" value="NM_003781.4"/>
</dbReference>
<dbReference type="RefSeq" id="NP_149357.1">
    <property type="nucleotide sequence ID" value="NM_033167.3"/>
</dbReference>
<dbReference type="RefSeq" id="NP_149358.1">
    <property type="nucleotide sequence ID" value="NM_033168.3"/>
</dbReference>
<dbReference type="RefSeq" id="NP_149359.1">
    <property type="nucleotide sequence ID" value="NM_033169.3"/>
</dbReference>
<dbReference type="RefSeq" id="XP_005247916.1">
    <property type="nucleotide sequence ID" value="XM_005247859.6"/>
</dbReference>
<dbReference type="RefSeq" id="XP_024309576.1">
    <property type="nucleotide sequence ID" value="XM_024453808.1"/>
</dbReference>
<dbReference type="RefSeq" id="XP_047305087.1">
    <property type="nucleotide sequence ID" value="XM_047449131.1"/>
</dbReference>
<dbReference type="RefSeq" id="XP_047305088.1">
    <property type="nucleotide sequence ID" value="XM_047449132.1"/>
</dbReference>
<dbReference type="RefSeq" id="XP_047305089.1">
    <property type="nucleotide sequence ID" value="XM_047449133.1"/>
</dbReference>
<dbReference type="RefSeq" id="XP_047305091.1">
    <property type="nucleotide sequence ID" value="XM_047449135.1"/>
</dbReference>
<dbReference type="RefSeq" id="XP_047305092.1">
    <property type="nucleotide sequence ID" value="XM_047449136.1"/>
</dbReference>
<dbReference type="RefSeq" id="XP_047305093.1">
    <property type="nucleotide sequence ID" value="XM_047449137.1"/>
</dbReference>
<dbReference type="RefSeq" id="XP_054204233.1">
    <property type="nucleotide sequence ID" value="XM_054348258.1"/>
</dbReference>
<dbReference type="RefSeq" id="XP_054204234.1">
    <property type="nucleotide sequence ID" value="XM_054348259.1"/>
</dbReference>
<dbReference type="RefSeq" id="XP_054204235.1">
    <property type="nucleotide sequence ID" value="XM_054348260.1"/>
</dbReference>
<dbReference type="RefSeq" id="XP_054204236.1">
    <property type="nucleotide sequence ID" value="XM_054348261.1"/>
</dbReference>
<dbReference type="RefSeq" id="XP_054204237.1">
    <property type="nucleotide sequence ID" value="XM_054348262.1"/>
</dbReference>
<dbReference type="RefSeq" id="XP_054204238.1">
    <property type="nucleotide sequence ID" value="XM_054348263.1"/>
</dbReference>
<dbReference type="RefSeq" id="XP_054204239.1">
    <property type="nucleotide sequence ID" value="XM_054348264.1"/>
</dbReference>
<dbReference type="RefSeq" id="XP_054204240.1">
    <property type="nucleotide sequence ID" value="XM_054348265.1"/>
</dbReference>
<dbReference type="SMR" id="O75752"/>
<dbReference type="BioGRID" id="114249">
    <property type="interactions" value="31"/>
</dbReference>
<dbReference type="FunCoup" id="O75752">
    <property type="interactions" value="280"/>
</dbReference>
<dbReference type="IntAct" id="O75752">
    <property type="interactions" value="22"/>
</dbReference>
<dbReference type="STRING" id="9606.ENSP00000498660"/>
<dbReference type="SwissLipids" id="SLP:000000789"/>
<dbReference type="CAZy" id="GT31">
    <property type="family name" value="Glycosyltransferase Family 31"/>
</dbReference>
<dbReference type="GlyCosmos" id="O75752">
    <property type="glycosylation" value="5 sites, No reported glycans"/>
</dbReference>
<dbReference type="GlyGen" id="O75752">
    <property type="glycosylation" value="9 sites, 1 O-linked glycan (2 sites)"/>
</dbReference>
<dbReference type="iPTMnet" id="O75752"/>
<dbReference type="PhosphoSitePlus" id="O75752"/>
<dbReference type="BioMuta" id="B3GALNT1"/>
<dbReference type="jPOST" id="O75752"/>
<dbReference type="MassIVE" id="O75752"/>
<dbReference type="PaxDb" id="9606-ENSP00000376532"/>
<dbReference type="PeptideAtlas" id="O75752"/>
<dbReference type="ProteomicsDB" id="50180"/>
<dbReference type="Pumba" id="O75752"/>
<dbReference type="Antibodypedia" id="33673">
    <property type="antibodies" value="92 antibodies from 18 providers"/>
</dbReference>
<dbReference type="DNASU" id="8706"/>
<dbReference type="Ensembl" id="ENST00000320474.10">
    <property type="protein sequence ID" value="ENSP00000323479.4"/>
    <property type="gene ID" value="ENSG00000169255.15"/>
</dbReference>
<dbReference type="Ensembl" id="ENST00000392779.6">
    <property type="protein sequence ID" value="ENSP00000376530.2"/>
    <property type="gene ID" value="ENSG00000169255.15"/>
</dbReference>
<dbReference type="Ensembl" id="ENST00000392781.7">
    <property type="protein sequence ID" value="ENSP00000376532.2"/>
    <property type="gene ID" value="ENSG00000169255.15"/>
</dbReference>
<dbReference type="Ensembl" id="ENST00000473285.5">
    <property type="protein sequence ID" value="ENSP00000418226.1"/>
    <property type="gene ID" value="ENSG00000169255.15"/>
</dbReference>
<dbReference type="Ensembl" id="ENST00000488170.5">
    <property type="protein sequence ID" value="ENSP00000420163.1"/>
    <property type="gene ID" value="ENSG00000169255.15"/>
</dbReference>
<dbReference type="Ensembl" id="ENST00000650695.1">
    <property type="protein sequence ID" value="ENSP00000498902.1"/>
    <property type="gene ID" value="ENSG00000169255.15"/>
</dbReference>
<dbReference type="Ensembl" id="ENST00000650733.1">
    <property type="protein sequence ID" value="ENSP00000499186.1"/>
    <property type="gene ID" value="ENSG00000169255.15"/>
</dbReference>
<dbReference type="Ensembl" id="ENST00000651117.1">
    <property type="protein sequence ID" value="ENSP00000498854.1"/>
    <property type="gene ID" value="ENSG00000169255.15"/>
</dbReference>
<dbReference type="Ensembl" id="ENST00000651147.1">
    <property type="protein sequence ID" value="ENSP00000498478.1"/>
    <property type="gene ID" value="ENSG00000169255.15"/>
</dbReference>
<dbReference type="Ensembl" id="ENST00000651178.1">
    <property type="protein sequence ID" value="ENSP00000498982.1"/>
    <property type="gene ID" value="ENSG00000169255.15"/>
</dbReference>
<dbReference type="Ensembl" id="ENST00000651254.1">
    <property type="protein sequence ID" value="ENSP00000498553.1"/>
    <property type="gene ID" value="ENSG00000169255.15"/>
</dbReference>
<dbReference type="Ensembl" id="ENST00000651292.1">
    <property type="protein sequence ID" value="ENSP00000498542.1"/>
    <property type="gene ID" value="ENSG00000169255.15"/>
</dbReference>
<dbReference type="Ensembl" id="ENST00000651305.1">
    <property type="protein sequence ID" value="ENSP00000498427.1"/>
    <property type="gene ID" value="ENSG00000169255.15"/>
</dbReference>
<dbReference type="Ensembl" id="ENST00000651379.1">
    <property type="protein sequence ID" value="ENSP00000498978.1"/>
    <property type="gene ID" value="ENSG00000169255.15"/>
</dbReference>
<dbReference type="Ensembl" id="ENST00000651380.1">
    <property type="protein sequence ID" value="ENSP00000499072.1"/>
    <property type="gene ID" value="ENSG00000169255.15"/>
</dbReference>
<dbReference type="Ensembl" id="ENST00000651460.1">
    <property type="protein sequence ID" value="ENSP00000498369.1"/>
    <property type="gene ID" value="ENSG00000169255.15"/>
</dbReference>
<dbReference type="Ensembl" id="ENST00000651509.1">
    <property type="protein sequence ID" value="ENSP00000499003.1"/>
    <property type="gene ID" value="ENSG00000169255.15"/>
</dbReference>
<dbReference type="Ensembl" id="ENST00000651686.1">
    <property type="protein sequence ID" value="ENSP00000498346.1"/>
    <property type="gene ID" value="ENSG00000169255.15"/>
</dbReference>
<dbReference type="Ensembl" id="ENST00000651689.1">
    <property type="protein sequence ID" value="ENSP00000499010.1"/>
    <property type="gene ID" value="ENSG00000169255.15"/>
</dbReference>
<dbReference type="Ensembl" id="ENST00000651791.1">
    <property type="protein sequence ID" value="ENSP00000499180.1"/>
    <property type="gene ID" value="ENSG00000169255.15"/>
</dbReference>
<dbReference type="Ensembl" id="ENST00000651916.1">
    <property type="protein sequence ID" value="ENSP00000498487.1"/>
    <property type="gene ID" value="ENSG00000169255.15"/>
</dbReference>
<dbReference type="Ensembl" id="ENST00000651953.1">
    <property type="protein sequence ID" value="ENSP00000498633.1"/>
    <property type="gene ID" value="ENSG00000169255.15"/>
</dbReference>
<dbReference type="Ensembl" id="ENST00000651972.1">
    <property type="protein sequence ID" value="ENSP00000498907.1"/>
    <property type="gene ID" value="ENSG00000169255.15"/>
</dbReference>
<dbReference type="Ensembl" id="ENST00000652032.1">
    <property type="protein sequence ID" value="ENSP00000498901.1"/>
    <property type="gene ID" value="ENSG00000169255.15"/>
</dbReference>
<dbReference type="Ensembl" id="ENST00000652059.1">
    <property type="protein sequence ID" value="ENSP00000498743.1"/>
    <property type="gene ID" value="ENSG00000169255.15"/>
</dbReference>
<dbReference type="Ensembl" id="ENST00000652111.1">
    <property type="protein sequence ID" value="ENSP00000498689.1"/>
    <property type="gene ID" value="ENSG00000169255.15"/>
</dbReference>
<dbReference type="Ensembl" id="ENST00000652143.1">
    <property type="protein sequence ID" value="ENSP00000498655.1"/>
    <property type="gene ID" value="ENSG00000169255.15"/>
</dbReference>
<dbReference type="Ensembl" id="ENST00000652377.1">
    <property type="protein sequence ID" value="ENSP00000498481.1"/>
    <property type="gene ID" value="ENSG00000169255.15"/>
</dbReference>
<dbReference type="Ensembl" id="ENST00000652596.1">
    <property type="protein sequence ID" value="ENSP00000498810.1"/>
    <property type="gene ID" value="ENSG00000169255.15"/>
</dbReference>
<dbReference type="Ensembl" id="ENST00000652669.1">
    <property type="protein sequence ID" value="ENSP00000498696.1"/>
    <property type="gene ID" value="ENSG00000169255.15"/>
</dbReference>
<dbReference type="Ensembl" id="ENST00000652730.1">
    <property type="protein sequence ID" value="ENSP00000498660.1"/>
    <property type="gene ID" value="ENSG00000169255.15"/>
</dbReference>
<dbReference type="GeneID" id="8706"/>
<dbReference type="KEGG" id="hsa:8706"/>
<dbReference type="MANE-Select" id="ENST00000320474.10">
    <property type="protein sequence ID" value="ENSP00000323479.4"/>
    <property type="RefSeq nucleotide sequence ID" value="NM_003781.4"/>
    <property type="RefSeq protein sequence ID" value="NP_003772.1"/>
</dbReference>
<dbReference type="UCSC" id="uc003fdv.4">
    <property type="organism name" value="human"/>
</dbReference>
<dbReference type="AGR" id="HGNC:918"/>
<dbReference type="CTD" id="8706"/>
<dbReference type="DisGeNET" id="8706"/>
<dbReference type="GeneCards" id="B3GALNT1"/>
<dbReference type="HGNC" id="HGNC:918">
    <property type="gene designation" value="B3GALNT1"/>
</dbReference>
<dbReference type="HPA" id="ENSG00000169255">
    <property type="expression patterns" value="Tissue enhanced (heart)"/>
</dbReference>
<dbReference type="MalaCards" id="B3GALNT1"/>
<dbReference type="MIM" id="111400">
    <property type="type" value="phenotype"/>
</dbReference>
<dbReference type="MIM" id="603094">
    <property type="type" value="gene"/>
</dbReference>
<dbReference type="MIM" id="615021">
    <property type="type" value="phenotype"/>
</dbReference>
<dbReference type="neXtProt" id="NX_O75752"/>
<dbReference type="OpenTargets" id="ENSG00000169255"/>
<dbReference type="PharmGKB" id="PA25211"/>
<dbReference type="VEuPathDB" id="HostDB:ENSG00000169255"/>
<dbReference type="eggNOG" id="KOG2287">
    <property type="taxonomic scope" value="Eukaryota"/>
</dbReference>
<dbReference type="GeneTree" id="ENSGT00940000162252"/>
<dbReference type="HOGENOM" id="CLU_036849_2_4_1"/>
<dbReference type="InParanoid" id="O75752"/>
<dbReference type="OMA" id="DICKYRH"/>
<dbReference type="OrthoDB" id="5957813at2759"/>
<dbReference type="PAN-GO" id="O75752">
    <property type="GO annotations" value="2 GO annotations based on evolutionary models"/>
</dbReference>
<dbReference type="PhylomeDB" id="O75752"/>
<dbReference type="TreeFam" id="TF318639"/>
<dbReference type="BioCyc" id="MetaCyc:HS09918-MONOMER"/>
<dbReference type="BRENDA" id="2.4.1.122">
    <property type="organism ID" value="2681"/>
</dbReference>
<dbReference type="BRENDA" id="2.4.1.62">
    <property type="organism ID" value="2681"/>
</dbReference>
<dbReference type="BRENDA" id="2.4.1.79">
    <property type="organism ID" value="2681"/>
</dbReference>
<dbReference type="BRENDA" id="2.4.1.88">
    <property type="organism ID" value="2681"/>
</dbReference>
<dbReference type="PathwayCommons" id="O75752"/>
<dbReference type="Reactome" id="R-HSA-9840309">
    <property type="pathway name" value="Glycosphingolipid biosynthesis"/>
</dbReference>
<dbReference type="SignaLink" id="O75752"/>
<dbReference type="UniPathway" id="UPA00378"/>
<dbReference type="BioGRID-ORCS" id="8706">
    <property type="hits" value="22 hits in 1140 CRISPR screens"/>
</dbReference>
<dbReference type="ChiTaRS" id="B3GALNT1">
    <property type="organism name" value="human"/>
</dbReference>
<dbReference type="GeneWiki" id="B3GALNT1"/>
<dbReference type="GenomeRNAi" id="8706"/>
<dbReference type="Pharos" id="O75752">
    <property type="development level" value="Tbio"/>
</dbReference>
<dbReference type="PRO" id="PR:O75752"/>
<dbReference type="Proteomes" id="UP000005640">
    <property type="component" value="Chromosome 3"/>
</dbReference>
<dbReference type="RNAct" id="O75752">
    <property type="molecule type" value="protein"/>
</dbReference>
<dbReference type="Bgee" id="ENSG00000169255">
    <property type="expression patterns" value="Expressed in cortical plate and 184 other cell types or tissues"/>
</dbReference>
<dbReference type="ExpressionAtlas" id="O75752">
    <property type="expression patterns" value="baseline and differential"/>
</dbReference>
<dbReference type="GO" id="GO:0000139">
    <property type="term" value="C:Golgi membrane"/>
    <property type="evidence" value="ECO:0000318"/>
    <property type="project" value="GO_Central"/>
</dbReference>
<dbReference type="GO" id="GO:0047273">
    <property type="term" value="F:galactosylgalactosylglucosylceramide beta-D-acetylgalactosaminyltransferase activity"/>
    <property type="evidence" value="ECO:0000304"/>
    <property type="project" value="Reactome"/>
</dbReference>
<dbReference type="GO" id="GO:0008499">
    <property type="term" value="F:N-acetyl-beta-D-glucosaminide beta-(1,3)-galactosyltransferase activity"/>
    <property type="evidence" value="ECO:0000318"/>
    <property type="project" value="GO_Central"/>
</dbReference>
<dbReference type="GO" id="GO:0006688">
    <property type="term" value="P:glycosphingolipid biosynthetic process"/>
    <property type="evidence" value="ECO:0000304"/>
    <property type="project" value="Reactome"/>
</dbReference>
<dbReference type="GO" id="GO:0009312">
    <property type="term" value="P:oligosaccharide biosynthetic process"/>
    <property type="evidence" value="ECO:0007669"/>
    <property type="project" value="Ensembl"/>
</dbReference>
<dbReference type="GO" id="GO:0006493">
    <property type="term" value="P:protein O-linked glycosylation"/>
    <property type="evidence" value="ECO:0000318"/>
    <property type="project" value="GO_Central"/>
</dbReference>
<dbReference type="FunFam" id="3.90.550.50:FF:000001">
    <property type="entry name" value="Hexosyltransferase"/>
    <property type="match status" value="1"/>
</dbReference>
<dbReference type="Gene3D" id="3.90.550.50">
    <property type="match status" value="1"/>
</dbReference>
<dbReference type="InterPro" id="IPR002659">
    <property type="entry name" value="Glyco_trans_31"/>
</dbReference>
<dbReference type="PANTHER" id="PTHR11214">
    <property type="entry name" value="BETA-1,3-N-ACETYLGLUCOSAMINYLTRANSFERASE"/>
    <property type="match status" value="1"/>
</dbReference>
<dbReference type="PANTHER" id="PTHR11214:SF153">
    <property type="entry name" value="UDP-GALNAC:BETA-1,3-N-ACETYLGALACTOSAMINYLTRANSFERASE 1"/>
    <property type="match status" value="1"/>
</dbReference>
<dbReference type="Pfam" id="PF01762">
    <property type="entry name" value="Galactosyl_T"/>
    <property type="match status" value="1"/>
</dbReference>
<organism>
    <name type="scientific">Homo sapiens</name>
    <name type="common">Human</name>
    <dbReference type="NCBI Taxonomy" id="9606"/>
    <lineage>
        <taxon>Eukaryota</taxon>
        <taxon>Metazoa</taxon>
        <taxon>Chordata</taxon>
        <taxon>Craniata</taxon>
        <taxon>Vertebrata</taxon>
        <taxon>Euteleostomi</taxon>
        <taxon>Mammalia</taxon>
        <taxon>Eutheria</taxon>
        <taxon>Euarchontoglires</taxon>
        <taxon>Primates</taxon>
        <taxon>Haplorrhini</taxon>
        <taxon>Catarrhini</taxon>
        <taxon>Hominidae</taxon>
        <taxon>Homo</taxon>
    </lineage>
</organism>
<name>B3GL1_HUMAN</name>
<feature type="chain" id="PRO_0000219153" description="UDP-GalNAc:beta-1,3-N-acetylgalactosaminyltransferase 1">
    <location>
        <begin position="1"/>
        <end position="331"/>
    </location>
</feature>
<feature type="topological domain" description="Cytoplasmic" evidence="2">
    <location>
        <begin position="1"/>
        <end position="20"/>
    </location>
</feature>
<feature type="transmembrane region" description="Helical; Signal-anchor for type II membrane protein" evidence="2">
    <location>
        <begin position="21"/>
        <end position="43"/>
    </location>
</feature>
<feature type="topological domain" description="Lumenal" evidence="2">
    <location>
        <begin position="44"/>
        <end position="331"/>
    </location>
</feature>
<feature type="glycosylation site" description="N-linked (GlcNAc...) asparagine" evidence="2">
    <location>
        <position position="72"/>
    </location>
</feature>
<feature type="glycosylation site" description="N-linked (GlcNAc...) asparagine" evidence="2">
    <location>
        <position position="154"/>
    </location>
</feature>
<feature type="glycosylation site" description="N-linked (GlcNAc...) asparagine" evidence="2">
    <location>
        <position position="198"/>
    </location>
</feature>
<feature type="glycosylation site" description="N-linked (GlcNAc...) asparagine" evidence="2">
    <location>
        <position position="212"/>
    </location>
</feature>
<feature type="glycosylation site" description="N-linked (GlcNAc...) asparagine" evidence="2">
    <location>
        <position position="326"/>
    </location>
</feature>
<feature type="sequence variant" id="VAR_025091" description="In dbSNP:rs2231257." evidence="6">
    <original>D</original>
    <variation>N</variation>
    <location>
        <position position="126"/>
    </location>
</feature>
<feature type="sequence variant" id="VAR_019646" description="In P2(k) phenotype; dbSNP:rs28937582." evidence="4">
    <original>E</original>
    <variation>A</variation>
    <location>
        <position position="266"/>
    </location>
</feature>
<feature type="sequence variant" id="VAR_019647" description="In P1(k) phenotype; dbSNP:rs104893683." evidence="4">
    <original>G</original>
    <variation>R</variation>
    <location>
        <position position="271"/>
    </location>
</feature>
<proteinExistence type="evidence at protein level"/>
<gene>
    <name evidence="9" type="primary">B3GALNT1</name>
    <name type="synonym">B3GALT3</name>
    <name type="ORF">UNQ531/PRO1074</name>
</gene>
<keyword id="KW-0095">Blood group antigen</keyword>
<keyword id="KW-0325">Glycoprotein</keyword>
<keyword id="KW-0328">Glycosyltransferase</keyword>
<keyword id="KW-0333">Golgi apparatus</keyword>
<keyword id="KW-0443">Lipid metabolism</keyword>
<keyword id="KW-0460">Magnesium</keyword>
<keyword id="KW-0472">Membrane</keyword>
<keyword id="KW-1267">Proteomics identification</keyword>
<keyword id="KW-1185">Reference proteome</keyword>
<keyword id="KW-0735">Signal-anchor</keyword>
<keyword id="KW-0808">Transferase</keyword>
<keyword id="KW-0812">Transmembrane</keyword>
<keyword id="KW-1133">Transmembrane helix</keyword>
<comment type="function">
    <text evidence="1 3">Transfers N-acetylgalactosamine onto globotriaosylceramide (PubMed:10993897). Plays a critical role in preimplantation stage embryonic development (By similarity).</text>
</comment>
<comment type="catalytic activity">
    <reaction evidence="3">
        <text>a globoside Gb3Cer (d18:1(4E)) + UDP-N-acetyl-alpha-D-galactosamine = a globoside Gb4Cer (d18:1(4E)) + UDP + H(+)</text>
        <dbReference type="Rhea" id="RHEA:22252"/>
        <dbReference type="ChEBI" id="CHEBI:15378"/>
        <dbReference type="ChEBI" id="CHEBI:18259"/>
        <dbReference type="ChEBI" id="CHEBI:18313"/>
        <dbReference type="ChEBI" id="CHEBI:58223"/>
        <dbReference type="ChEBI" id="CHEBI:67138"/>
        <dbReference type="EC" id="2.4.1.79"/>
    </reaction>
    <physiologicalReaction direction="left-to-right" evidence="3">
        <dbReference type="Rhea" id="RHEA:22253"/>
    </physiologicalReaction>
</comment>
<comment type="cofactor">
    <cofactor evidence="3 5">
        <name>Mg(2+)</name>
        <dbReference type="ChEBI" id="CHEBI:18420"/>
    </cofactor>
</comment>
<comment type="pathway">
    <text>Protein modification; protein glycosylation.</text>
</comment>
<comment type="subcellular location">
    <subcellularLocation>
        <location>Golgi apparatus membrane</location>
        <topology>Single-pass type II membrane protein</topology>
    </subcellularLocation>
</comment>
<comment type="tissue specificity">
    <text evidence="3 5">Higher expression in heart and brain, and to a lesser extent in lung, placenta, kidney and testis. Lower expression in liver, spleen and stomach. No expression in skeletal muscle.</text>
</comment>
<comment type="polymorphism">
    <text evidence="4">Genetic variation in B3GALNT1 is responsible for the blood group P1PK system [MIM:111400]. Different combinations or absence of the P1PK antigens define 5 different phenotypes: P1, P2, P1(k), P2(k), and P. The P1(k) and P2(k) phenotypes are rare and characterized by lack of the P antigen.</text>
</comment>
<comment type="polymorphism">
    <text evidence="3">B3GALNT1 activity is responsible for the globoside blood group system (GLOB), which is defined by the P antigen [MIM:615021].</text>
</comment>
<comment type="similarity">
    <text evidence="7">Belongs to the glycosyltransferase 31 family.</text>
</comment>
<comment type="online information" name="Functional Glycomics Gateway - GTase">
    <link uri="http://www.functionalglycomics.org/glycomics/molecule/jsp/glycoEnzyme/viewGlycoEnzyme.jsp?gbpId=gt_hum_451"/>
    <text>Beta-1,3-galactosyltransferase 3</text>
</comment>
<reference key="1">
    <citation type="journal article" date="1998" name="J. Biol. Chem.">
        <title>A family of human beta3-galactosyltransferases. Characterization of four members of a UDP-galactose:beta-N-acetyl-glucosamine/beta-N-acetyl-galactosamine beta-1,3-galactosyltransferase family.</title>
        <authorList>
            <person name="Amado M."/>
            <person name="Almeida R."/>
            <person name="Carneiro F."/>
            <person name="Levery S.B."/>
            <person name="Holmes E.H."/>
            <person name="Nomoto M."/>
            <person name="Hollingsworth M.A."/>
            <person name="Hassan H."/>
            <person name="Schwientek T."/>
            <person name="Nielsen P.A."/>
            <person name="Bennett E.P."/>
            <person name="Clausen H."/>
        </authorList>
    </citation>
    <scope>NUCLEOTIDE SEQUENCE [MRNA]</scope>
    <scope>COFACTOR</scope>
    <scope>TISSUE SPECIFICITY</scope>
</reference>
<reference key="2">
    <citation type="journal article" date="2000" name="J. Biol. Chem.">
        <title>Expression cloning of human globoside synthase cDNAs. Identification of beta3Gal-T3 as UDP-N-acetylgalactosamine:globotriaosylceramide beta1,3-N-acetylgalactosaminyltransferase.</title>
        <authorList>
            <person name="Okajima T."/>
            <person name="Nakamura Y."/>
            <person name="Uchikawa M."/>
            <person name="Haslam D.B."/>
            <person name="Numata S."/>
            <person name="Furukawa K."/>
            <person name="Urano T."/>
            <person name="Furukawa K."/>
        </authorList>
    </citation>
    <scope>NUCLEOTIDE SEQUENCE [MRNA]</scope>
    <scope>FUNCTION</scope>
    <scope>CATALYTIC ACTIVITY</scope>
    <scope>COFACTOR</scope>
    <scope>TISSUE SPECIFICITY</scope>
    <scope>POLYMORPHISM</scope>
    <source>
        <tissue>Kidney</tissue>
    </source>
</reference>
<reference key="3">
    <citation type="submission" date="1999-03" db="EMBL/GenBank/DDBJ databases">
        <authorList>
            <person name="Luo W.Q."/>
            <person name="Chen J.H."/>
            <person name="Huang X.W."/>
            <person name="Zhou Y."/>
            <person name="Zhou H.J."/>
            <person name="Hu S.N."/>
            <person name="Yuan J.G."/>
        </authorList>
    </citation>
    <scope>NUCLEOTIDE SEQUENCE [MRNA]</scope>
</reference>
<reference key="4">
    <citation type="submission" date="1999-05" db="EMBL/GenBank/DDBJ databases">
        <authorList>
            <person name="Zhou H.J."/>
            <person name="Huang X.W."/>
            <person name="Zhou Y."/>
            <person name="Hu S.L."/>
            <person name="Yuan J.G."/>
            <person name="Qiang B.Q."/>
        </authorList>
    </citation>
    <scope>NUCLEOTIDE SEQUENCE [MRNA]</scope>
</reference>
<reference key="5">
    <citation type="journal article" date="2002" name="J. Biol. Chem.">
        <title>Molecular basis of the globoside-deficient P(k) blood group phenotype. Identification of four inactivating mutations in the UDP-N-acetylgalactosamine: globotriaosylceramide 3-beta-N-acetylgalactosaminyltransferase gene.</title>
        <authorList>
            <person name="Hellberg A."/>
            <person name="Poole J."/>
            <person name="Olsson M.L."/>
        </authorList>
    </citation>
    <scope>NUCLEOTIDE SEQUENCE [GENOMIC DNA]</scope>
    <scope>VARIANTS ALA-266 AND ARG-271</scope>
    <scope>POLYMORPHISM</scope>
</reference>
<reference key="6">
    <citation type="journal article" date="2003" name="Genome Res.">
        <title>The secreted protein discovery initiative (SPDI), a large-scale effort to identify novel human secreted and transmembrane proteins: a bioinformatics assessment.</title>
        <authorList>
            <person name="Clark H.F."/>
            <person name="Gurney A.L."/>
            <person name="Abaya E."/>
            <person name="Baker K."/>
            <person name="Baldwin D.T."/>
            <person name="Brush J."/>
            <person name="Chen J."/>
            <person name="Chow B."/>
            <person name="Chui C."/>
            <person name="Crowley C."/>
            <person name="Currell B."/>
            <person name="Deuel B."/>
            <person name="Dowd P."/>
            <person name="Eaton D."/>
            <person name="Foster J.S."/>
            <person name="Grimaldi C."/>
            <person name="Gu Q."/>
            <person name="Hass P.E."/>
            <person name="Heldens S."/>
            <person name="Huang A."/>
            <person name="Kim H.S."/>
            <person name="Klimowski L."/>
            <person name="Jin Y."/>
            <person name="Johnson S."/>
            <person name="Lee J."/>
            <person name="Lewis L."/>
            <person name="Liao D."/>
            <person name="Mark M.R."/>
            <person name="Robbie E."/>
            <person name="Sanchez C."/>
            <person name="Schoenfeld J."/>
            <person name="Seshagiri S."/>
            <person name="Simmons L."/>
            <person name="Singh J."/>
            <person name="Smith V."/>
            <person name="Stinson J."/>
            <person name="Vagts A."/>
            <person name="Vandlen R.L."/>
            <person name="Watanabe C."/>
            <person name="Wieand D."/>
            <person name="Woods K."/>
            <person name="Xie M.-H."/>
            <person name="Yansura D.G."/>
            <person name="Yi S."/>
            <person name="Yu G."/>
            <person name="Yuan J."/>
            <person name="Zhang M."/>
            <person name="Zhang Z."/>
            <person name="Goddard A.D."/>
            <person name="Wood W.I."/>
            <person name="Godowski P.J."/>
            <person name="Gray A.M."/>
        </authorList>
    </citation>
    <scope>NUCLEOTIDE SEQUENCE [LARGE SCALE MRNA]</scope>
</reference>
<reference key="7">
    <citation type="submission" date="2004-06" db="EMBL/GenBank/DDBJ databases">
        <title>Cloning of human full open reading frames in Gateway(TM) system entry vector (pDONR201).</title>
        <authorList>
            <person name="Ebert L."/>
            <person name="Schick M."/>
            <person name="Neubert P."/>
            <person name="Schatten R."/>
            <person name="Henze S."/>
            <person name="Korn B."/>
        </authorList>
    </citation>
    <scope>NUCLEOTIDE SEQUENCE [LARGE SCALE MRNA]</scope>
</reference>
<reference key="8">
    <citation type="submission" date="2005-08" db="EMBL/GenBank/DDBJ databases">
        <authorList>
            <consortium name="SeattleSNPs variation discovery resource"/>
        </authorList>
    </citation>
    <scope>NUCLEOTIDE SEQUENCE [GENOMIC DNA]</scope>
    <scope>VARIANT ASN-126</scope>
</reference>
<reference key="9">
    <citation type="submission" date="2005-09" db="EMBL/GenBank/DDBJ databases">
        <authorList>
            <person name="Mural R.J."/>
            <person name="Istrail S."/>
            <person name="Sutton G.G."/>
            <person name="Florea L."/>
            <person name="Halpern A.L."/>
            <person name="Mobarry C.M."/>
            <person name="Lippert R."/>
            <person name="Walenz B."/>
            <person name="Shatkay H."/>
            <person name="Dew I."/>
            <person name="Miller J.R."/>
            <person name="Flanigan M.J."/>
            <person name="Edwards N.J."/>
            <person name="Bolanos R."/>
            <person name="Fasulo D."/>
            <person name="Halldorsson B.V."/>
            <person name="Hannenhalli S."/>
            <person name="Turner R."/>
            <person name="Yooseph S."/>
            <person name="Lu F."/>
            <person name="Nusskern D.R."/>
            <person name="Shue B.C."/>
            <person name="Zheng X.H."/>
            <person name="Zhong F."/>
            <person name="Delcher A.L."/>
            <person name="Huson D.H."/>
            <person name="Kravitz S.A."/>
            <person name="Mouchard L."/>
            <person name="Reinert K."/>
            <person name="Remington K.A."/>
            <person name="Clark A.G."/>
            <person name="Waterman M.S."/>
            <person name="Eichler E.E."/>
            <person name="Adams M.D."/>
            <person name="Hunkapiller M.W."/>
            <person name="Myers E.W."/>
            <person name="Venter J.C."/>
        </authorList>
    </citation>
    <scope>NUCLEOTIDE SEQUENCE [LARGE SCALE GENOMIC DNA]</scope>
</reference>
<reference key="10">
    <citation type="journal article" date="2004" name="Genome Res.">
        <title>The status, quality, and expansion of the NIH full-length cDNA project: the Mammalian Gene Collection (MGC).</title>
        <authorList>
            <consortium name="The MGC Project Team"/>
        </authorList>
    </citation>
    <scope>NUCLEOTIDE SEQUENCE [LARGE SCALE MRNA]</scope>
    <source>
        <tissue evidence="8">Brain</tissue>
    </source>
</reference>
<sequence length="331" mass="39512">MASALWTVLPSRMSLRSLKWSLLLLSLLSFFVMWYLSLPHYNVIERVNWMYFYEYEPIYRQDFHFTLREHSNCSHQNPFLVILVTSHPSDVKARQAIRVTWGEKKSWWGYEVLTFFLLGQEAEKEDKMLALSLEDEHLLYGDIIRQDFLDTYNNLTLKTIMAFRWVTEFCPNAKYVMKTDTDVFINTGNLVKYLLNLNHSEKFFTGYPLIDNYSYRGFYQKTHISYQEYPFKVFPPYCSGLGYIMSRDLVPRIYEMMGHVKPIKFEDVYVGICLNLLKVNIHIPEDTNLFFLYRIHLDVCQLRRVIAAHGFSSKEIITFWQVMLRNTTCHY</sequence>
<protein>
    <recommendedName>
        <fullName evidence="7">UDP-GalNAc:beta-1,3-N-acetylgalactosaminyltransferase 1</fullName>
        <shortName>Beta-1,3-GalNAc-T1</shortName>
        <ecNumber evidence="3">2.4.1.79</ecNumber>
    </recommendedName>
    <alternativeName>
        <fullName>Beta-1,3-galactosyltransferase 3</fullName>
        <shortName>Beta-1,3-GalTase 3</shortName>
        <shortName>Beta3Gal-T3</shortName>
        <shortName>Beta3GalT3</shortName>
        <shortName>b3Gal-T3</shortName>
    </alternativeName>
    <alternativeName>
        <fullName>Beta-3-Gx-T3</fullName>
    </alternativeName>
    <alternativeName>
        <fullName>Galactosylgalactosylglucosylceramide beta-D-acetyl-galactosaminyltransferase</fullName>
    </alternativeName>
    <alternativeName>
        <fullName>Globoside synthase</fullName>
    </alternativeName>
    <alternativeName>
        <fullName>UDP-N-acetylgalactosamine:globotriaosylceramide beta-1,3-N-acetylgalactosaminyltransferase</fullName>
    </alternativeName>
</protein>
<accession>O75752</accession>
<accession>D3DNM4</accession>
<accession>Q3Y531</accession>
<accession>Q6IAI5</accession>
<accession>Q8NFM8</accession>
<accession>Q8NFM9</accession>
<accession>Q9HA06</accession>
<evidence type="ECO:0000250" key="1">
    <source>
        <dbReference type="UniProtKB" id="Q920V1"/>
    </source>
</evidence>
<evidence type="ECO:0000255" key="2"/>
<evidence type="ECO:0000269" key="3">
    <source>
    </source>
</evidence>
<evidence type="ECO:0000269" key="4">
    <source>
    </source>
</evidence>
<evidence type="ECO:0000269" key="5">
    <source>
    </source>
</evidence>
<evidence type="ECO:0000269" key="6">
    <source ref="8"/>
</evidence>
<evidence type="ECO:0000305" key="7"/>
<evidence type="ECO:0000312" key="8">
    <source>
        <dbReference type="EMBL" id="AAH47618.1"/>
    </source>
</evidence>
<evidence type="ECO:0000312" key="9">
    <source>
        <dbReference type="HGNC" id="HGNC:918"/>
    </source>
</evidence>